<sequence>MLAWRPGRPDGCQAAGGRRYNPGHDCIKASVSLNSAARNAPAGSQPVKAELWKRVYSRVGSYWKGLVLAVLLMAGAAATQPTLAVIMKPLLDDGFSGAKPHYVWFLPLAVVGLILLRGICNFFSDYLLAWVANNVLRGIRGEMFERLLGLPDADFKRGDTGRLLNRFTIDAGNVTGYATDVITVLVRETLVVIALIGVLLYMSWALTLIILVMLPVSVGIARAFTRRLRRINRETVNMNAELTRVVSEGIDGQRVIKLFDGYDAERRRFDFVNSRLRRFAMRSATADAALTPLTQVCISVAVGAVIAVALSQANSGALTVGSFASFMAALAQIFDPIKRLTNLAGKMQKMLVAAESVFTLVDQTPEADAGTRALPEPVRGKVEFRAVSHRFPDADRDTVSAVSFLVEPGQTVALVGRSGSGKTTLVNMLPRFVLPDGGDILFDDVPIQDLTLRSLRSHLSLVSQDVVLFDDTIAANVGYGAGGTVDDARVRDALAAANLLEFVDGLPLGIHTPVGQNAARLSGGQRQRLAIARALIKNAPVLILDEATSALDNESERQVQASLERLMRGRTTLVIAHRLSTVQNADRIIVLDAGKIVEHGPHSELLAANGLYASLYNMQFRED</sequence>
<evidence type="ECO:0000255" key="1">
    <source>
        <dbReference type="HAMAP-Rule" id="MF_01703"/>
    </source>
</evidence>
<protein>
    <recommendedName>
        <fullName evidence="1">ATP-dependent lipid A-core flippase</fullName>
        <ecNumber evidence="1">7.5.2.6</ecNumber>
    </recommendedName>
    <alternativeName>
        <fullName evidence="1">Lipid A export ATP-binding/permease protein MsbA</fullName>
    </alternativeName>
</protein>
<gene>
    <name evidence="1" type="primary">msbA</name>
    <name type="ordered locus">BP2321</name>
</gene>
<reference key="1">
    <citation type="journal article" date="2003" name="Nat. Genet.">
        <title>Comparative analysis of the genome sequences of Bordetella pertussis, Bordetella parapertussis and Bordetella bronchiseptica.</title>
        <authorList>
            <person name="Parkhill J."/>
            <person name="Sebaihia M."/>
            <person name="Preston A."/>
            <person name="Murphy L.D."/>
            <person name="Thomson N.R."/>
            <person name="Harris D.E."/>
            <person name="Holden M.T.G."/>
            <person name="Churcher C.M."/>
            <person name="Bentley S.D."/>
            <person name="Mungall K.L."/>
            <person name="Cerdeno-Tarraga A.-M."/>
            <person name="Temple L."/>
            <person name="James K.D."/>
            <person name="Harris B."/>
            <person name="Quail M.A."/>
            <person name="Achtman M."/>
            <person name="Atkin R."/>
            <person name="Baker S."/>
            <person name="Basham D."/>
            <person name="Bason N."/>
            <person name="Cherevach I."/>
            <person name="Chillingworth T."/>
            <person name="Collins M."/>
            <person name="Cronin A."/>
            <person name="Davis P."/>
            <person name="Doggett J."/>
            <person name="Feltwell T."/>
            <person name="Goble A."/>
            <person name="Hamlin N."/>
            <person name="Hauser H."/>
            <person name="Holroyd S."/>
            <person name="Jagels K."/>
            <person name="Leather S."/>
            <person name="Moule S."/>
            <person name="Norberczak H."/>
            <person name="O'Neil S."/>
            <person name="Ormond D."/>
            <person name="Price C."/>
            <person name="Rabbinowitsch E."/>
            <person name="Rutter S."/>
            <person name="Sanders M."/>
            <person name="Saunders D."/>
            <person name="Seeger K."/>
            <person name="Sharp S."/>
            <person name="Simmonds M."/>
            <person name="Skelton J."/>
            <person name="Squares R."/>
            <person name="Squares S."/>
            <person name="Stevens K."/>
            <person name="Unwin L."/>
            <person name="Whitehead S."/>
            <person name="Barrell B.G."/>
            <person name="Maskell D.J."/>
        </authorList>
    </citation>
    <scope>NUCLEOTIDE SEQUENCE [LARGE SCALE GENOMIC DNA]</scope>
    <source>
        <strain>Tohama I / ATCC BAA-589 / NCTC 13251</strain>
    </source>
</reference>
<accession>Q7VWD8</accession>
<proteinExistence type="inferred from homology"/>
<feature type="chain" id="PRO_0000092570" description="ATP-dependent lipid A-core flippase">
    <location>
        <begin position="1"/>
        <end position="623"/>
    </location>
</feature>
<feature type="transmembrane region" description="Helical" evidence="1">
    <location>
        <begin position="66"/>
        <end position="86"/>
    </location>
</feature>
<feature type="transmembrane region" description="Helical" evidence="1">
    <location>
        <begin position="103"/>
        <end position="123"/>
    </location>
</feature>
<feature type="transmembrane region" description="Helical" evidence="1">
    <location>
        <begin position="190"/>
        <end position="210"/>
    </location>
</feature>
<feature type="transmembrane region" description="Helical" evidence="1">
    <location>
        <begin position="290"/>
        <end position="310"/>
    </location>
</feature>
<feature type="transmembrane region" description="Helical" evidence="1">
    <location>
        <begin position="317"/>
        <end position="337"/>
    </location>
</feature>
<feature type="domain" description="ABC transmembrane type-1" evidence="1">
    <location>
        <begin position="67"/>
        <end position="349"/>
    </location>
</feature>
<feature type="domain" description="ABC transporter" evidence="1">
    <location>
        <begin position="382"/>
        <end position="618"/>
    </location>
</feature>
<feature type="binding site" evidence="1">
    <location>
        <begin position="416"/>
        <end position="423"/>
    </location>
    <ligand>
        <name>ATP</name>
        <dbReference type="ChEBI" id="CHEBI:30616"/>
    </ligand>
</feature>
<dbReference type="EC" id="7.5.2.6" evidence="1"/>
<dbReference type="EMBL" id="BX640418">
    <property type="protein sequence ID" value="CAE42594.1"/>
    <property type="molecule type" value="Genomic_DNA"/>
</dbReference>
<dbReference type="RefSeq" id="NP_880959.1">
    <property type="nucleotide sequence ID" value="NC_002929.2"/>
</dbReference>
<dbReference type="RefSeq" id="WP_010930870.1">
    <property type="nucleotide sequence ID" value="NZ_CP039022.1"/>
</dbReference>
<dbReference type="SMR" id="Q7VWD8"/>
<dbReference type="STRING" id="257313.BP2321"/>
<dbReference type="PaxDb" id="257313-BP2321"/>
<dbReference type="GeneID" id="69602223"/>
<dbReference type="KEGG" id="bpe:BP2321"/>
<dbReference type="PATRIC" id="fig|257313.5.peg.2502"/>
<dbReference type="eggNOG" id="COG1132">
    <property type="taxonomic scope" value="Bacteria"/>
</dbReference>
<dbReference type="HOGENOM" id="CLU_000604_84_3_4"/>
<dbReference type="Proteomes" id="UP000002676">
    <property type="component" value="Chromosome"/>
</dbReference>
<dbReference type="GO" id="GO:0005886">
    <property type="term" value="C:plasma membrane"/>
    <property type="evidence" value="ECO:0007669"/>
    <property type="project" value="UniProtKB-SubCell"/>
</dbReference>
<dbReference type="GO" id="GO:0015421">
    <property type="term" value="F:ABC-type oligopeptide transporter activity"/>
    <property type="evidence" value="ECO:0007669"/>
    <property type="project" value="TreeGrafter"/>
</dbReference>
<dbReference type="GO" id="GO:0005524">
    <property type="term" value="F:ATP binding"/>
    <property type="evidence" value="ECO:0007669"/>
    <property type="project" value="UniProtKB-KW"/>
</dbReference>
<dbReference type="GO" id="GO:0016887">
    <property type="term" value="F:ATP hydrolysis activity"/>
    <property type="evidence" value="ECO:0007669"/>
    <property type="project" value="InterPro"/>
</dbReference>
<dbReference type="GO" id="GO:0034040">
    <property type="term" value="F:ATPase-coupled lipid transmembrane transporter activity"/>
    <property type="evidence" value="ECO:0007669"/>
    <property type="project" value="InterPro"/>
</dbReference>
<dbReference type="CDD" id="cd18552">
    <property type="entry name" value="ABC_6TM_MsbA_like"/>
    <property type="match status" value="1"/>
</dbReference>
<dbReference type="FunFam" id="3.40.50.300:FF:000221">
    <property type="entry name" value="Multidrug ABC transporter ATP-binding protein"/>
    <property type="match status" value="1"/>
</dbReference>
<dbReference type="Gene3D" id="1.20.1560.10">
    <property type="entry name" value="ABC transporter type 1, transmembrane domain"/>
    <property type="match status" value="1"/>
</dbReference>
<dbReference type="Gene3D" id="3.40.50.300">
    <property type="entry name" value="P-loop containing nucleotide triphosphate hydrolases"/>
    <property type="match status" value="1"/>
</dbReference>
<dbReference type="InterPro" id="IPR003593">
    <property type="entry name" value="AAA+_ATPase"/>
</dbReference>
<dbReference type="InterPro" id="IPR011527">
    <property type="entry name" value="ABC1_TM_dom"/>
</dbReference>
<dbReference type="InterPro" id="IPR036640">
    <property type="entry name" value="ABC1_TM_sf"/>
</dbReference>
<dbReference type="InterPro" id="IPR003439">
    <property type="entry name" value="ABC_transporter-like_ATP-bd"/>
</dbReference>
<dbReference type="InterPro" id="IPR017871">
    <property type="entry name" value="ABC_transporter-like_CS"/>
</dbReference>
<dbReference type="InterPro" id="IPR011917">
    <property type="entry name" value="ABC_transpr_lipidA"/>
</dbReference>
<dbReference type="InterPro" id="IPR027417">
    <property type="entry name" value="P-loop_NTPase"/>
</dbReference>
<dbReference type="InterPro" id="IPR039421">
    <property type="entry name" value="Type_1_exporter"/>
</dbReference>
<dbReference type="NCBIfam" id="TIGR02203">
    <property type="entry name" value="MsbA_lipidA"/>
    <property type="match status" value="1"/>
</dbReference>
<dbReference type="PANTHER" id="PTHR43394:SF1">
    <property type="entry name" value="ATP-BINDING CASSETTE SUB-FAMILY B MEMBER 10, MITOCHONDRIAL"/>
    <property type="match status" value="1"/>
</dbReference>
<dbReference type="PANTHER" id="PTHR43394">
    <property type="entry name" value="ATP-DEPENDENT PERMEASE MDL1, MITOCHONDRIAL"/>
    <property type="match status" value="1"/>
</dbReference>
<dbReference type="Pfam" id="PF00664">
    <property type="entry name" value="ABC_membrane"/>
    <property type="match status" value="1"/>
</dbReference>
<dbReference type="Pfam" id="PF00005">
    <property type="entry name" value="ABC_tran"/>
    <property type="match status" value="1"/>
</dbReference>
<dbReference type="SMART" id="SM00382">
    <property type="entry name" value="AAA"/>
    <property type="match status" value="1"/>
</dbReference>
<dbReference type="SUPFAM" id="SSF90123">
    <property type="entry name" value="ABC transporter transmembrane region"/>
    <property type="match status" value="1"/>
</dbReference>
<dbReference type="SUPFAM" id="SSF52540">
    <property type="entry name" value="P-loop containing nucleoside triphosphate hydrolases"/>
    <property type="match status" value="1"/>
</dbReference>
<dbReference type="PROSITE" id="PS50929">
    <property type="entry name" value="ABC_TM1F"/>
    <property type="match status" value="1"/>
</dbReference>
<dbReference type="PROSITE" id="PS00211">
    <property type="entry name" value="ABC_TRANSPORTER_1"/>
    <property type="match status" value="1"/>
</dbReference>
<dbReference type="PROSITE" id="PS50893">
    <property type="entry name" value="ABC_TRANSPORTER_2"/>
    <property type="match status" value="1"/>
</dbReference>
<dbReference type="PROSITE" id="PS51239">
    <property type="entry name" value="MSBA"/>
    <property type="match status" value="1"/>
</dbReference>
<name>MSBA_BORPE</name>
<organism>
    <name type="scientific">Bordetella pertussis (strain Tohama I / ATCC BAA-589 / NCTC 13251)</name>
    <dbReference type="NCBI Taxonomy" id="257313"/>
    <lineage>
        <taxon>Bacteria</taxon>
        <taxon>Pseudomonadati</taxon>
        <taxon>Pseudomonadota</taxon>
        <taxon>Betaproteobacteria</taxon>
        <taxon>Burkholderiales</taxon>
        <taxon>Alcaligenaceae</taxon>
        <taxon>Bordetella</taxon>
    </lineage>
</organism>
<comment type="function">
    <text evidence="1">Involved in lipopolysaccharide (LPS) biosynthesis. Translocates lipid A-core from the inner to the outer leaflet of the inner membrane. Transmembrane domains (TMD) form a pore in the inner membrane and the ATP-binding domain (NBD) is responsible for energy generation.</text>
</comment>
<comment type="catalytic activity">
    <reaction evidence="1">
        <text>ATP + H2O + lipid A-core oligosaccharideSide 1 = ADP + phosphate + lipid A-core oligosaccharideSide 2.</text>
        <dbReference type="EC" id="7.5.2.6"/>
    </reaction>
</comment>
<comment type="subunit">
    <text evidence="1">Homodimer.</text>
</comment>
<comment type="subcellular location">
    <subcellularLocation>
        <location evidence="1">Cell inner membrane</location>
        <topology evidence="1">Multi-pass membrane protein</topology>
    </subcellularLocation>
</comment>
<comment type="domain">
    <text evidence="1">In MsbA the ATP-binding domain (NBD) and the transmembrane domain (TMD) are fused.</text>
</comment>
<comment type="similarity">
    <text evidence="1">Belongs to the ABC transporter superfamily. Lipid exporter (TC 3.A.1.106) family.</text>
</comment>
<keyword id="KW-0067">ATP-binding</keyword>
<keyword id="KW-0997">Cell inner membrane</keyword>
<keyword id="KW-1003">Cell membrane</keyword>
<keyword id="KW-0445">Lipid transport</keyword>
<keyword id="KW-0472">Membrane</keyword>
<keyword id="KW-0547">Nucleotide-binding</keyword>
<keyword id="KW-1185">Reference proteome</keyword>
<keyword id="KW-1278">Translocase</keyword>
<keyword id="KW-0812">Transmembrane</keyword>
<keyword id="KW-1133">Transmembrane helix</keyword>
<keyword id="KW-0813">Transport</keyword>